<name>FMCD_PSEAI</name>
<gene>
    <name type="primary">pilA</name>
    <name type="synonym">fimA</name>
</gene>
<sequence>MKAQKGFTLIELMIVVAIIGILAAIAIPQYQNYVARSEGASALATINPLKTTVEESLSRGIAGSKILIGTTASTADTTYVGIDEKANKLGTVAVTIKDTGDGTVKFTFATGQSSPKNAGKEITLNRTAEGVWTCTSTQEEMFIPKGCNKP</sequence>
<proteinExistence type="inferred from homology"/>
<comment type="subunit">
    <text>The pili are polar flexible filaments of about 5.4 nanometers diameter and 2.5 micrometers average length; they consist of only a single polypeptide chain arranged in a helical configuration of five subunits per turn in the assembled pilus.</text>
</comment>
<comment type="subcellular location">
    <subcellularLocation>
        <location>Fimbrium</location>
    </subcellularLocation>
    <subcellularLocation>
        <location evidence="2">Membrane</location>
        <topology evidence="2">Single-pass membrane protein</topology>
    </subcellularLocation>
</comment>
<comment type="similarity">
    <text evidence="4">Belongs to the N-Me-Phe pilin family.</text>
</comment>
<comment type="sequence caution" evidence="4">
    <conflict type="erroneous initiation">
        <sequence resource="EMBL-CDS" id="AAA25945"/>
    </conflict>
</comment>
<reference key="1">
    <citation type="journal article" date="1988" name="Infect. Immun.">
        <title>Serial isolates of Pseudomonas aeruginosa from a cystic fibrosis patient have identical pilin sequences.</title>
        <authorList>
            <person name="Pasloske B.L."/>
            <person name="Joffe A.M."/>
            <person name="Sun Q."/>
            <person name="Volpel K."/>
            <person name="Paranchych W."/>
            <person name="Eftekhar F."/>
            <person name="Speert D.P."/>
        </authorList>
    </citation>
    <scope>NUCLEOTIDE SEQUENCE [GENOMIC DNA]</scope>
    <source>
        <strain>CD</strain>
    </source>
</reference>
<protein>
    <recommendedName>
        <fullName>Fimbrial protein</fullName>
    </recommendedName>
    <alternativeName>
        <fullName>Pilin</fullName>
    </alternativeName>
</protein>
<feature type="propeptide" id="PRO_0000024168" description="Leader sequence" evidence="3">
    <location>
        <begin position="1"/>
        <end position="6"/>
    </location>
</feature>
<feature type="chain" id="PRO_0000024169" description="Fimbrial protein">
    <location>
        <begin position="7"/>
        <end position="150"/>
    </location>
</feature>
<feature type="transmembrane region" description="Helical" evidence="2">
    <location>
        <begin position="7"/>
        <end position="27"/>
    </location>
</feature>
<feature type="modified residue" description="N-methylphenylalanine" evidence="3">
    <location>
        <position position="7"/>
    </location>
</feature>
<feature type="disulfide bond" evidence="1">
    <location>
        <begin position="134"/>
        <end position="147"/>
    </location>
</feature>
<accession>P17837</accession>
<organism>
    <name type="scientific">Pseudomonas aeruginosa</name>
    <dbReference type="NCBI Taxonomy" id="287"/>
    <lineage>
        <taxon>Bacteria</taxon>
        <taxon>Pseudomonadati</taxon>
        <taxon>Pseudomonadota</taxon>
        <taxon>Gammaproteobacteria</taxon>
        <taxon>Pseudomonadales</taxon>
        <taxon>Pseudomonadaceae</taxon>
        <taxon>Pseudomonas</taxon>
    </lineage>
</organism>
<evidence type="ECO:0000250" key="1"/>
<evidence type="ECO:0000255" key="2"/>
<evidence type="ECO:0000255" key="3">
    <source>
        <dbReference type="PROSITE-ProRule" id="PRU01070"/>
    </source>
</evidence>
<evidence type="ECO:0000305" key="4"/>
<keyword id="KW-1015">Disulfide bond</keyword>
<keyword id="KW-0281">Fimbrium</keyword>
<keyword id="KW-0472">Membrane</keyword>
<keyword id="KW-0488">Methylation</keyword>
<keyword id="KW-0812">Transmembrane</keyword>
<keyword id="KW-1133">Transmembrane helix</keyword>
<dbReference type="EMBL" id="M24281">
    <property type="protein sequence ID" value="AAA25945.1"/>
    <property type="status" value="ALT_INIT"/>
    <property type="molecule type" value="Genomic_DNA"/>
</dbReference>
<dbReference type="PIR" id="A43504">
    <property type="entry name" value="A43504"/>
</dbReference>
<dbReference type="RefSeq" id="WP_031636800.1">
    <property type="nucleotide sequence ID" value="NZ_WIGE01000040.1"/>
</dbReference>
<dbReference type="SMR" id="P17837"/>
<dbReference type="PATRIC" id="fig|287.1494.peg.5534"/>
<dbReference type="GO" id="GO:0016020">
    <property type="term" value="C:membrane"/>
    <property type="evidence" value="ECO:0007669"/>
    <property type="project" value="UniProtKB-SubCell"/>
</dbReference>
<dbReference type="GO" id="GO:0044096">
    <property type="term" value="C:type IV pilus"/>
    <property type="evidence" value="ECO:0007669"/>
    <property type="project" value="TreeGrafter"/>
</dbReference>
<dbReference type="GO" id="GO:0007155">
    <property type="term" value="P:cell adhesion"/>
    <property type="evidence" value="ECO:0007669"/>
    <property type="project" value="InterPro"/>
</dbReference>
<dbReference type="GO" id="GO:0043107">
    <property type="term" value="P:type IV pilus-dependent motility"/>
    <property type="evidence" value="ECO:0007669"/>
    <property type="project" value="TreeGrafter"/>
</dbReference>
<dbReference type="FunFam" id="3.30.700.10:FF:000003">
    <property type="entry name" value="Type IV pilin"/>
    <property type="match status" value="1"/>
</dbReference>
<dbReference type="Gene3D" id="3.30.700.10">
    <property type="entry name" value="Glycoprotein, Type 4 Pilin"/>
    <property type="match status" value="1"/>
</dbReference>
<dbReference type="InterPro" id="IPR012902">
    <property type="entry name" value="N_methyl_site"/>
</dbReference>
<dbReference type="InterPro" id="IPR001082">
    <property type="entry name" value="Pilin"/>
</dbReference>
<dbReference type="InterPro" id="IPR045584">
    <property type="entry name" value="Pilin-like"/>
</dbReference>
<dbReference type="InterPro" id="IPR050470">
    <property type="entry name" value="T4P/T2SS_Core"/>
</dbReference>
<dbReference type="NCBIfam" id="TIGR02532">
    <property type="entry name" value="IV_pilin_GFxxxE"/>
    <property type="match status" value="1"/>
</dbReference>
<dbReference type="PANTHER" id="PTHR30093">
    <property type="entry name" value="GENERAL SECRETION PATHWAY PROTEIN G"/>
    <property type="match status" value="1"/>
</dbReference>
<dbReference type="PANTHER" id="PTHR30093:SF34">
    <property type="entry name" value="PREPILIN PEPTIDASE-DEPENDENT PROTEIN D"/>
    <property type="match status" value="1"/>
</dbReference>
<dbReference type="Pfam" id="PF07963">
    <property type="entry name" value="N_methyl"/>
    <property type="match status" value="1"/>
</dbReference>
<dbReference type="Pfam" id="PF00114">
    <property type="entry name" value="Pilin"/>
    <property type="match status" value="1"/>
</dbReference>
<dbReference type="SUPFAM" id="SSF54523">
    <property type="entry name" value="Pili subunits"/>
    <property type="match status" value="1"/>
</dbReference>
<dbReference type="PROSITE" id="PS00409">
    <property type="entry name" value="PROKAR_NTER_METHYL"/>
    <property type="match status" value="1"/>
</dbReference>